<gene>
    <name type="primary">NLN</name>
</gene>
<proteinExistence type="evidence at transcript level"/>
<keyword id="KW-0007">Acetylation</keyword>
<keyword id="KW-0963">Cytoplasm</keyword>
<keyword id="KW-0378">Hydrolase</keyword>
<keyword id="KW-0479">Metal-binding</keyword>
<keyword id="KW-0482">Metalloprotease</keyword>
<keyword id="KW-0496">Mitochondrion</keyword>
<keyword id="KW-0645">Protease</keyword>
<keyword id="KW-1185">Reference proteome</keyword>
<keyword id="KW-0809">Transit peptide</keyword>
<keyword id="KW-0862">Zinc</keyword>
<feature type="transit peptide" description="Mitochondrion" evidence="1">
    <location>
        <begin position="1"/>
        <end position="37"/>
    </location>
</feature>
<feature type="chain" id="PRO_0000319048" description="Neurolysin, mitochondrial">
    <location>
        <begin position="38"/>
        <end position="704"/>
    </location>
</feature>
<feature type="active site" evidence="4">
    <location>
        <position position="498"/>
    </location>
</feature>
<feature type="binding site" evidence="4">
    <location>
        <position position="497"/>
    </location>
    <ligand>
        <name>Zn(2+)</name>
        <dbReference type="ChEBI" id="CHEBI:29105"/>
        <note>catalytic</note>
    </ligand>
</feature>
<feature type="binding site" evidence="4">
    <location>
        <position position="501"/>
    </location>
    <ligand>
        <name>Zn(2+)</name>
        <dbReference type="ChEBI" id="CHEBI:29105"/>
        <note>catalytic</note>
    </ligand>
</feature>
<feature type="binding site" evidence="4">
    <location>
        <position position="504"/>
    </location>
    <ligand>
        <name>Zn(2+)</name>
        <dbReference type="ChEBI" id="CHEBI:29105"/>
        <note>catalytic</note>
    </ligand>
</feature>
<feature type="modified residue" description="N6-acetyllysine" evidence="3">
    <location>
        <position position="664"/>
    </location>
</feature>
<organism>
    <name type="scientific">Pongo abelii</name>
    <name type="common">Sumatran orangutan</name>
    <name type="synonym">Pongo pygmaeus abelii</name>
    <dbReference type="NCBI Taxonomy" id="9601"/>
    <lineage>
        <taxon>Eukaryota</taxon>
        <taxon>Metazoa</taxon>
        <taxon>Chordata</taxon>
        <taxon>Craniata</taxon>
        <taxon>Vertebrata</taxon>
        <taxon>Euteleostomi</taxon>
        <taxon>Mammalia</taxon>
        <taxon>Eutheria</taxon>
        <taxon>Euarchontoglires</taxon>
        <taxon>Primates</taxon>
        <taxon>Haplorrhini</taxon>
        <taxon>Catarrhini</taxon>
        <taxon>Hominidae</taxon>
        <taxon>Pongo</taxon>
    </lineage>
</organism>
<comment type="function">
    <text evidence="1">Hydrolyzes oligopeptides such as neurotensin, bradykinin and dynorphin A. Acts as a regulator of cannabinoid signaling pathway by mediating degradation of hemopressin, an antagonist peptide of the cannabinoid receptor CNR1.</text>
</comment>
<comment type="catalytic activity">
    <reaction evidence="1">
        <text>Preferential cleavage in neurotensin: 10-Pro-|-Tyr-11.</text>
        <dbReference type="EC" id="3.4.24.16"/>
    </reaction>
</comment>
<comment type="cofactor">
    <cofactor evidence="2">
        <name>Zn(2+)</name>
        <dbReference type="ChEBI" id="CHEBI:29105"/>
    </cofactor>
    <text evidence="2">Binds 1 zinc ion per subunit.</text>
</comment>
<comment type="subcellular location">
    <subcellularLocation>
        <location evidence="1">Mitochondrion intermembrane space</location>
    </subcellularLocation>
    <subcellularLocation>
        <location evidence="1">Cytoplasm</location>
        <location evidence="1">Cytosol</location>
    </subcellularLocation>
</comment>
<comment type="similarity">
    <text evidence="5">Belongs to the peptidase M3 family.</text>
</comment>
<sequence>MIARCLLAVRSLRRVGGSRILLRMTLGREVMSPLQAMSSYTVTGRNVLRWDLSPEQIKTRTEELIVQTKQVYDAVGMLGIEEVTYENCLQALADIEVKYIVERTMLDFPQHVSSDKEVRAASTEADKRLSRFDIEMSMRGDIFERIVRLQETCDLGKIKPEARRYLEKSIKMGKRNGLHLPEQVQNEIKSMKKRMSELCIDFNKNLNEDDTFLVFSKAELGALPDDFIDSLEKIDDDKYKITLKYPHYFPVMKKCCIPETRRRMEMAFNTRCKEENTIILQQLLPLRAKVAKLLGYSTHADFVLEMNTAKSTSRVTAFLDDLSQKLKPLGEAEREFILNLKKKECEDRGFEYDGKINAWDLYYYMTQTEELKYSIDQEFLKEYFPIEVVTEGLLNTYQELLGLSFEQVTDAHVWNKNVTLYTVKDKATGEVLGQFYLDLYPRDRKYNHAACFGLQPGCLLPDGSRMMAVAALVVNFSQPVAGRPSLLRHDEVRTYFHEFGHVMHQICAQTDFARFSGTNVETDFVEVPSQMLENWVWDVDSLRRLSKHYKDGSPISDDLLEKLVASRLINTGLLTLRQIVLSKVDQSLHTNTSLDAASEYAKYCSEILGVAATPGTNMPATFGHLAGGYDGQYYGYLWSEVFSMDMFYSCFKKEGIMNPEVGMKYRNLILKPGGSLDGMDMLHNFLKREPNQKAFLMSRGLHAS</sequence>
<protein>
    <recommendedName>
        <fullName>Neurolysin, mitochondrial</fullName>
        <ecNumber evidence="1">3.4.24.16</ecNumber>
    </recommendedName>
    <alternativeName>
        <fullName>Microsomal endopeptidase</fullName>
        <shortName>MEP</shortName>
    </alternativeName>
    <alternativeName>
        <fullName>Mitochondrial oligopeptidase M</fullName>
    </alternativeName>
    <alternativeName>
        <fullName>Neurotensin endopeptidase</fullName>
    </alternativeName>
</protein>
<accession>Q5R9V6</accession>
<name>NEUL_PONAB</name>
<reference key="1">
    <citation type="submission" date="2004-11" db="EMBL/GenBank/DDBJ databases">
        <authorList>
            <consortium name="The German cDNA consortium"/>
        </authorList>
    </citation>
    <scope>NUCLEOTIDE SEQUENCE [LARGE SCALE MRNA]</scope>
    <source>
        <tissue>Brain cortex</tissue>
    </source>
</reference>
<dbReference type="EC" id="3.4.24.16" evidence="1"/>
<dbReference type="EMBL" id="CR859276">
    <property type="protein sequence ID" value="CAH91454.1"/>
    <property type="molecule type" value="mRNA"/>
</dbReference>
<dbReference type="RefSeq" id="NP_001127421.1">
    <property type="nucleotide sequence ID" value="NM_001133949.2"/>
</dbReference>
<dbReference type="SMR" id="Q5R9V6"/>
<dbReference type="FunCoup" id="Q5R9V6">
    <property type="interactions" value="969"/>
</dbReference>
<dbReference type="STRING" id="9601.ENSPPYP00000017333"/>
<dbReference type="MEROPS" id="M03.002"/>
<dbReference type="GeneID" id="100174491"/>
<dbReference type="KEGG" id="pon:100174491"/>
<dbReference type="CTD" id="57486"/>
<dbReference type="eggNOG" id="KOG2089">
    <property type="taxonomic scope" value="Eukaryota"/>
</dbReference>
<dbReference type="InParanoid" id="Q5R9V6"/>
<dbReference type="OrthoDB" id="534666at2759"/>
<dbReference type="Proteomes" id="UP000001595">
    <property type="component" value="Unplaced"/>
</dbReference>
<dbReference type="GO" id="GO:0005829">
    <property type="term" value="C:cytosol"/>
    <property type="evidence" value="ECO:0007669"/>
    <property type="project" value="UniProtKB-SubCell"/>
</dbReference>
<dbReference type="GO" id="GO:0005758">
    <property type="term" value="C:mitochondrial intermembrane space"/>
    <property type="evidence" value="ECO:0007669"/>
    <property type="project" value="UniProtKB-SubCell"/>
</dbReference>
<dbReference type="GO" id="GO:0046872">
    <property type="term" value="F:metal ion binding"/>
    <property type="evidence" value="ECO:0007669"/>
    <property type="project" value="UniProtKB-KW"/>
</dbReference>
<dbReference type="GO" id="GO:0004222">
    <property type="term" value="F:metalloendopeptidase activity"/>
    <property type="evidence" value="ECO:0007669"/>
    <property type="project" value="InterPro"/>
</dbReference>
<dbReference type="GO" id="GO:0006518">
    <property type="term" value="P:peptide metabolic process"/>
    <property type="evidence" value="ECO:0007669"/>
    <property type="project" value="TreeGrafter"/>
</dbReference>
<dbReference type="GO" id="GO:0006508">
    <property type="term" value="P:proteolysis"/>
    <property type="evidence" value="ECO:0007669"/>
    <property type="project" value="UniProtKB-KW"/>
</dbReference>
<dbReference type="CDD" id="cd06455">
    <property type="entry name" value="M3A_TOP"/>
    <property type="match status" value="1"/>
</dbReference>
<dbReference type="FunFam" id="1.20.1050.40:FF:000001">
    <property type="entry name" value="Thimet oligopeptidase 1"/>
    <property type="match status" value="1"/>
</dbReference>
<dbReference type="FunFam" id="3.40.390.10:FF:000006">
    <property type="entry name" value="Thimet oligopeptidase 1"/>
    <property type="match status" value="1"/>
</dbReference>
<dbReference type="Gene3D" id="3.40.390.10">
    <property type="entry name" value="Collagenase (Catalytic Domain)"/>
    <property type="match status" value="1"/>
</dbReference>
<dbReference type="Gene3D" id="1.20.1050.40">
    <property type="entry name" value="Endopeptidase. Chain P, domain 1"/>
    <property type="match status" value="1"/>
</dbReference>
<dbReference type="Gene3D" id="1.10.1370.10">
    <property type="entry name" value="Neurolysin, domain 3"/>
    <property type="match status" value="1"/>
</dbReference>
<dbReference type="InterPro" id="IPR024079">
    <property type="entry name" value="MetalloPept_cat_dom_sf"/>
</dbReference>
<dbReference type="InterPro" id="IPR024077">
    <property type="entry name" value="Neurolysin/TOP_dom2"/>
</dbReference>
<dbReference type="InterPro" id="IPR024080">
    <property type="entry name" value="Neurolysin/TOP_N"/>
</dbReference>
<dbReference type="InterPro" id="IPR045090">
    <property type="entry name" value="Pept_M3A_M3B"/>
</dbReference>
<dbReference type="InterPro" id="IPR001567">
    <property type="entry name" value="Pept_M3A_M3B_dom"/>
</dbReference>
<dbReference type="PANTHER" id="PTHR11804:SF44">
    <property type="entry name" value="NEUROLYSIN, MITOCHONDRIAL"/>
    <property type="match status" value="1"/>
</dbReference>
<dbReference type="PANTHER" id="PTHR11804">
    <property type="entry name" value="PROTEASE M3 THIMET OLIGOPEPTIDASE-RELATED"/>
    <property type="match status" value="1"/>
</dbReference>
<dbReference type="Pfam" id="PF01432">
    <property type="entry name" value="Peptidase_M3"/>
    <property type="match status" value="1"/>
</dbReference>
<dbReference type="SUPFAM" id="SSF55486">
    <property type="entry name" value="Metalloproteases ('zincins'), catalytic domain"/>
    <property type="match status" value="1"/>
</dbReference>
<dbReference type="PROSITE" id="PS00142">
    <property type="entry name" value="ZINC_PROTEASE"/>
    <property type="match status" value="1"/>
</dbReference>
<evidence type="ECO:0000250" key="1">
    <source>
        <dbReference type="UniProtKB" id="P42676"/>
    </source>
</evidence>
<evidence type="ECO:0000250" key="2">
    <source>
        <dbReference type="UniProtKB" id="P52888"/>
    </source>
</evidence>
<evidence type="ECO:0000250" key="3">
    <source>
        <dbReference type="UniProtKB" id="Q9BYT8"/>
    </source>
</evidence>
<evidence type="ECO:0000255" key="4">
    <source>
        <dbReference type="PROSITE-ProRule" id="PRU10095"/>
    </source>
</evidence>
<evidence type="ECO:0000305" key="5"/>